<geneLocation type="plasmid" evidence="4"/>
<name>VSP11_BORHE</name>
<sequence length="205" mass="21742">MRKRISAIIMTLFMVFMSCNNGGPELKSDEVAKSDGTVLDLAKVSKKIKEVSAFAASVKEVHTLIKSIGDLAKAIGKKIKTDETGTLESSTADQNEQLVAGAFQVVSTVKGELESLVQVDGISDDLKAKVNEAKNANDGLLSKFKSSAKDNESVKKDEEAKKVIDRTNASATELKKLDTAVDELLKAANEAVSAAIAELTAPAKS</sequence>
<accession>Q45206</accession>
<comment type="function">
    <text evidence="1">The Vlp and Vsp proteins are antigenically distinct proteins, only one vlp or vsp gene is transcriptionally active at any one time. Switching between these genes is a mechanism of host immune response evasion.</text>
</comment>
<comment type="subcellular location">
    <subcellularLocation>
        <location evidence="1">Cell outer membrane</location>
        <topology>Lipid-anchor</topology>
    </subcellularLocation>
</comment>
<comment type="miscellaneous">
    <text evidence="9">Genes for both Vlp and Vsp families are on (usually) unnamed linear plasmids in B.hermsii HS1.</text>
</comment>
<comment type="similarity">
    <text evidence="5">Belongs to the variable small protein (Vsp) family.</text>
</comment>
<reference evidence="10" key="1">
    <citation type="journal article" date="1994" name="Cell">
        <title>Antigen diversity in the bacterium B. hermsii through 'somatic' mutations in rearranged vmp genes.</title>
        <authorList>
            <person name="Restrepo B.I."/>
            <person name="Barbour A.G."/>
        </authorList>
    </citation>
    <scope>NUCLEOTIDE SEQUENCE [GENOMIC DNA]</scope>
    <source>
        <strain>ATCC 35209 / HS1</strain>
    </source>
</reference>
<reference evidence="8" key="2">
    <citation type="journal article" date="1998" name="Infect. Immun.">
        <title>Population structure of the relapsing fever spirochete Borrelia hermsii as indicated by polymorphism of two multigene families that encode immunogenic outer surface lipoproteins.</title>
        <authorList>
            <person name="Hinnebusch B.J."/>
            <person name="Barbour A.G."/>
            <person name="Restrepo B.I."/>
            <person name="Schwan T.G."/>
        </authorList>
    </citation>
    <scope>NOMENCLATURE</scope>
</reference>
<feature type="signal peptide" evidence="3">
    <location>
        <begin position="1"/>
        <end position="18"/>
    </location>
</feature>
<feature type="chain" id="PRO_0000244513" description="Variable small protein 11" evidence="2">
    <location>
        <begin position="19"/>
        <end position="205"/>
    </location>
</feature>
<feature type="lipid moiety-binding region" description="N-palmitoyl cysteine" evidence="2 8">
    <location>
        <position position="19"/>
    </location>
</feature>
<feature type="lipid moiety-binding region" description="S-diacylglycerol cysteine" evidence="2 8">
    <location>
        <position position="19"/>
    </location>
</feature>
<organism>
    <name type="scientific">Borrelia hermsii</name>
    <dbReference type="NCBI Taxonomy" id="140"/>
    <lineage>
        <taxon>Bacteria</taxon>
        <taxon>Pseudomonadati</taxon>
        <taxon>Spirochaetota</taxon>
        <taxon>Spirochaetia</taxon>
        <taxon>Spirochaetales</taxon>
        <taxon>Borreliaceae</taxon>
        <taxon>Borrelia</taxon>
    </lineage>
</organism>
<dbReference type="EMBL" id="L33900">
    <property type="protein sequence ID" value="AAA59219.1"/>
    <property type="molecule type" value="Genomic_DNA"/>
</dbReference>
<dbReference type="SMR" id="Q45206"/>
<dbReference type="GO" id="GO:0009279">
    <property type="term" value="C:cell outer membrane"/>
    <property type="evidence" value="ECO:0007669"/>
    <property type="project" value="UniProtKB-SubCell"/>
</dbReference>
<dbReference type="Gene3D" id="1.20.120.240">
    <property type="entry name" value="Lipoprotein, type 6"/>
    <property type="match status" value="1"/>
</dbReference>
<dbReference type="InterPro" id="IPR001800">
    <property type="entry name" value="Lipoprotein_OspC"/>
</dbReference>
<dbReference type="InterPro" id="IPR036437">
    <property type="entry name" value="OspC-like_sf"/>
</dbReference>
<dbReference type="Pfam" id="PF01441">
    <property type="entry name" value="Lipoprotein_6"/>
    <property type="match status" value="1"/>
</dbReference>
<dbReference type="SUPFAM" id="SSF63515">
    <property type="entry name" value="Outer surface protein C (OspC)"/>
    <property type="match status" value="1"/>
</dbReference>
<dbReference type="PROSITE" id="PS51257">
    <property type="entry name" value="PROKAR_LIPOPROTEIN"/>
    <property type="match status" value="1"/>
</dbReference>
<gene>
    <name evidence="7" type="primary">vsp11</name>
    <name evidence="6" type="synonym">vmp11</name>
</gene>
<keyword id="KW-0998">Cell outer membrane</keyword>
<keyword id="KW-0449">Lipoprotein</keyword>
<keyword id="KW-0472">Membrane</keyword>
<keyword id="KW-0564">Palmitate</keyword>
<keyword id="KW-0614">Plasmid</keyword>
<keyword id="KW-0732">Signal</keyword>
<protein>
    <recommendedName>
        <fullName evidence="7">Variable small protein 11</fullName>
    </recommendedName>
</protein>
<proteinExistence type="inferred from homology"/>
<evidence type="ECO:0000250" key="1">
    <source>
        <dbReference type="UniProtKB" id="P21875"/>
    </source>
</evidence>
<evidence type="ECO:0000255" key="2"/>
<evidence type="ECO:0000255" key="3">
    <source>
        <dbReference type="PROSITE-ProRule" id="PRU00303"/>
    </source>
</evidence>
<evidence type="ECO:0000269" key="4">
    <source>
    </source>
</evidence>
<evidence type="ECO:0000269" key="5">
    <source>
    </source>
</evidence>
<evidence type="ECO:0000303" key="6">
    <source>
    </source>
</evidence>
<evidence type="ECO:0000303" key="7">
    <source>
    </source>
</evidence>
<evidence type="ECO:0000305" key="8"/>
<evidence type="ECO:0000305" key="9">
    <source>
    </source>
</evidence>
<evidence type="ECO:0000312" key="10">
    <source>
        <dbReference type="EMBL" id="AAA59219.1"/>
    </source>
</evidence>